<proteinExistence type="inferred from homology"/>
<sequence length="73" mass="8380">MPIWLGILVGVVALVAGVALGFFIARKYMMNYLQKNPPINEQMLKMMMMQMGQKPSQKKINQMMSAMNKQQMK</sequence>
<evidence type="ECO:0000255" key="1">
    <source>
        <dbReference type="HAMAP-Rule" id="MF_00363"/>
    </source>
</evidence>
<protein>
    <recommendedName>
        <fullName evidence="1">UPF0154 protein BA_3742/GBAA_3742/BAS3468</fullName>
    </recommendedName>
</protein>
<keyword id="KW-0472">Membrane</keyword>
<keyword id="KW-1185">Reference proteome</keyword>
<keyword id="KW-0812">Transmembrane</keyword>
<keyword id="KW-1133">Transmembrane helix</keyword>
<name>Y3742_BACAN</name>
<gene>
    <name type="ordered locus">BA_3742</name>
    <name type="ordered locus">GBAA_3742</name>
    <name type="ordered locus">BAS3468</name>
</gene>
<organism>
    <name type="scientific">Bacillus anthracis</name>
    <dbReference type="NCBI Taxonomy" id="1392"/>
    <lineage>
        <taxon>Bacteria</taxon>
        <taxon>Bacillati</taxon>
        <taxon>Bacillota</taxon>
        <taxon>Bacilli</taxon>
        <taxon>Bacillales</taxon>
        <taxon>Bacillaceae</taxon>
        <taxon>Bacillus</taxon>
        <taxon>Bacillus cereus group</taxon>
    </lineage>
</organism>
<comment type="subcellular location">
    <subcellularLocation>
        <location evidence="1">Membrane</location>
        <topology evidence="1">Single-pass membrane protein</topology>
    </subcellularLocation>
</comment>
<comment type="similarity">
    <text evidence="1">Belongs to the UPF0154 family.</text>
</comment>
<dbReference type="EMBL" id="AE016879">
    <property type="protein sequence ID" value="AAP27489.1"/>
    <property type="molecule type" value="Genomic_DNA"/>
</dbReference>
<dbReference type="EMBL" id="AE017334">
    <property type="protein sequence ID" value="AAT32855.1"/>
    <property type="molecule type" value="Genomic_DNA"/>
</dbReference>
<dbReference type="EMBL" id="AE017225">
    <property type="protein sequence ID" value="AAT55774.1"/>
    <property type="molecule type" value="Genomic_DNA"/>
</dbReference>
<dbReference type="RefSeq" id="NP_846003.1">
    <property type="nucleotide sequence ID" value="NC_003997.3"/>
</dbReference>
<dbReference type="RefSeq" id="WP_001123317.1">
    <property type="nucleotide sequence ID" value="NZ_WXXJ01000029.1"/>
</dbReference>
<dbReference type="RefSeq" id="YP_029723.1">
    <property type="nucleotide sequence ID" value="NC_005945.1"/>
</dbReference>
<dbReference type="SMR" id="Q81Y17"/>
<dbReference type="STRING" id="261594.GBAA_3742"/>
<dbReference type="DNASU" id="1087035"/>
<dbReference type="KEGG" id="ban:BA_3742"/>
<dbReference type="KEGG" id="bar:GBAA_3742"/>
<dbReference type="KEGG" id="bat:BAS3468"/>
<dbReference type="PATRIC" id="fig|198094.11.peg.3712"/>
<dbReference type="eggNOG" id="COG3763">
    <property type="taxonomic scope" value="Bacteria"/>
</dbReference>
<dbReference type="HOGENOM" id="CLU_180108_0_1_9"/>
<dbReference type="OMA" id="PISEEMM"/>
<dbReference type="Proteomes" id="UP000000427">
    <property type="component" value="Chromosome"/>
</dbReference>
<dbReference type="Proteomes" id="UP000000594">
    <property type="component" value="Chromosome"/>
</dbReference>
<dbReference type="GO" id="GO:0005886">
    <property type="term" value="C:plasma membrane"/>
    <property type="evidence" value="ECO:0007669"/>
    <property type="project" value="UniProtKB-UniRule"/>
</dbReference>
<dbReference type="HAMAP" id="MF_00363">
    <property type="entry name" value="UPF0154"/>
    <property type="match status" value="1"/>
</dbReference>
<dbReference type="InterPro" id="IPR005359">
    <property type="entry name" value="UPF0154"/>
</dbReference>
<dbReference type="NCBIfam" id="NF002503">
    <property type="entry name" value="PRK01844.1"/>
    <property type="match status" value="1"/>
</dbReference>
<dbReference type="Pfam" id="PF03672">
    <property type="entry name" value="UPF0154"/>
    <property type="match status" value="1"/>
</dbReference>
<feature type="chain" id="PRO_0000214957" description="UPF0154 protein BA_3742/GBAA_3742/BAS3468">
    <location>
        <begin position="1"/>
        <end position="73"/>
    </location>
</feature>
<feature type="transmembrane region" description="Helical" evidence="1">
    <location>
        <begin position="4"/>
        <end position="26"/>
    </location>
</feature>
<reference key="1">
    <citation type="journal article" date="2003" name="Nature">
        <title>The genome sequence of Bacillus anthracis Ames and comparison to closely related bacteria.</title>
        <authorList>
            <person name="Read T.D."/>
            <person name="Peterson S.N."/>
            <person name="Tourasse N.J."/>
            <person name="Baillie L.W."/>
            <person name="Paulsen I.T."/>
            <person name="Nelson K.E."/>
            <person name="Tettelin H."/>
            <person name="Fouts D.E."/>
            <person name="Eisen J.A."/>
            <person name="Gill S.R."/>
            <person name="Holtzapple E.K."/>
            <person name="Okstad O.A."/>
            <person name="Helgason E."/>
            <person name="Rilstone J."/>
            <person name="Wu M."/>
            <person name="Kolonay J.F."/>
            <person name="Beanan M.J."/>
            <person name="Dodson R.J."/>
            <person name="Brinkac L.M."/>
            <person name="Gwinn M.L."/>
            <person name="DeBoy R.T."/>
            <person name="Madpu R."/>
            <person name="Daugherty S.C."/>
            <person name="Durkin A.S."/>
            <person name="Haft D.H."/>
            <person name="Nelson W.C."/>
            <person name="Peterson J.D."/>
            <person name="Pop M."/>
            <person name="Khouri H.M."/>
            <person name="Radune D."/>
            <person name="Benton J.L."/>
            <person name="Mahamoud Y."/>
            <person name="Jiang L."/>
            <person name="Hance I.R."/>
            <person name="Weidman J.F."/>
            <person name="Berry K.J."/>
            <person name="Plaut R.D."/>
            <person name="Wolf A.M."/>
            <person name="Watkins K.L."/>
            <person name="Nierman W.C."/>
            <person name="Hazen A."/>
            <person name="Cline R.T."/>
            <person name="Redmond C."/>
            <person name="Thwaite J.E."/>
            <person name="White O."/>
            <person name="Salzberg S.L."/>
            <person name="Thomason B."/>
            <person name="Friedlander A.M."/>
            <person name="Koehler T.M."/>
            <person name="Hanna P.C."/>
            <person name="Kolstoe A.-B."/>
            <person name="Fraser C.M."/>
        </authorList>
    </citation>
    <scope>NUCLEOTIDE SEQUENCE [LARGE SCALE GENOMIC DNA]</scope>
    <source>
        <strain>Ames / isolate Porton</strain>
    </source>
</reference>
<reference key="2">
    <citation type="journal article" date="2009" name="J. Bacteriol.">
        <title>The complete genome sequence of Bacillus anthracis Ames 'Ancestor'.</title>
        <authorList>
            <person name="Ravel J."/>
            <person name="Jiang L."/>
            <person name="Stanley S.T."/>
            <person name="Wilson M.R."/>
            <person name="Decker R.S."/>
            <person name="Read T.D."/>
            <person name="Worsham P."/>
            <person name="Keim P.S."/>
            <person name="Salzberg S.L."/>
            <person name="Fraser-Liggett C.M."/>
            <person name="Rasko D.A."/>
        </authorList>
    </citation>
    <scope>NUCLEOTIDE SEQUENCE [LARGE SCALE GENOMIC DNA]</scope>
    <source>
        <strain>Ames ancestor</strain>
    </source>
</reference>
<reference key="3">
    <citation type="submission" date="2004-01" db="EMBL/GenBank/DDBJ databases">
        <title>Complete genome sequence of Bacillus anthracis Sterne.</title>
        <authorList>
            <person name="Brettin T.S."/>
            <person name="Bruce D."/>
            <person name="Challacombe J.F."/>
            <person name="Gilna P."/>
            <person name="Han C."/>
            <person name="Hill K."/>
            <person name="Hitchcock P."/>
            <person name="Jackson P."/>
            <person name="Keim P."/>
            <person name="Longmire J."/>
            <person name="Lucas S."/>
            <person name="Okinaka R."/>
            <person name="Richardson P."/>
            <person name="Rubin E."/>
            <person name="Tice H."/>
        </authorList>
    </citation>
    <scope>NUCLEOTIDE SEQUENCE [LARGE SCALE GENOMIC DNA]</scope>
    <source>
        <strain>Sterne</strain>
    </source>
</reference>
<accession>Q81Y17</accession>
<accession>Q6HVB5</accession>
<accession>Q6KPI3</accession>